<organism evidence="10">
    <name type="scientific">Rattus norvegicus</name>
    <name type="common">Rat</name>
    <dbReference type="NCBI Taxonomy" id="10116"/>
    <lineage>
        <taxon>Eukaryota</taxon>
        <taxon>Metazoa</taxon>
        <taxon>Chordata</taxon>
        <taxon>Craniata</taxon>
        <taxon>Vertebrata</taxon>
        <taxon>Euteleostomi</taxon>
        <taxon>Mammalia</taxon>
        <taxon>Eutheria</taxon>
        <taxon>Euarchontoglires</taxon>
        <taxon>Glires</taxon>
        <taxon>Rodentia</taxon>
        <taxon>Myomorpha</taxon>
        <taxon>Muroidea</taxon>
        <taxon>Muridae</taxon>
        <taxon>Murinae</taxon>
        <taxon>Rattus</taxon>
    </lineage>
</organism>
<name>DESP_RAT</name>
<proteinExistence type="evidence at protein level"/>
<gene>
    <name evidence="11" type="primary">Dsp</name>
</gene>
<accession>F1LMV6</accession>
<accession>Q4QQR7</accession>
<comment type="function">
    <text evidence="6">Major high molecular weight protein of desmosomes. Regulates profibrotic gene expression in cardiomyocytes via activation of the MAPK14/p38 MAPK signaling cascade and increase in TGFB1 protein abundance (PubMed:26858265).</text>
</comment>
<comment type="subunit">
    <text evidence="1 2">Homodimer. Interacts with COL17A1 (via cytoplasmic region) (By similarity). Interacts with DSC2 (By similarity). Interacts with PKP1 (By similarity). Interacts with PKP2 (By similarity). Interacts weakly with TMEM65 (By similarity).</text>
</comment>
<comment type="subcellular location">
    <subcellularLocation>
        <location evidence="2">Cell junction</location>
        <location evidence="2">Desmosome</location>
    </subcellularLocation>
    <subcellularLocation>
        <location evidence="1">Cell membrane</location>
    </subcellularLocation>
    <subcellularLocation>
        <location evidence="2">Cytoplasm</location>
    </subcellularLocation>
    <text evidence="1 2">Localizes to desmosome precursor particles in the cytoplasm (By similarity). Localizes to the cytoplasm in undifferentiated keratinocytes however becomes localizes to both lateral and tricellular cell-cell contacts as differentiation progresses and as epithelial sheet formation completes (By similarity).</text>
</comment>
<comment type="tissue specificity">
    <text evidence="6">Expressed in cardiomyocytes (at protein level).</text>
</comment>
<comment type="domain">
    <text evidence="2">The N-terminal region is required for localization to the desmosomal plaque and interacts with the N-terminal region of PKP1.</text>
</comment>
<comment type="PTM">
    <text evidence="2">Phosphorylation at Ser-2855 increases association with intermediate filament cytokeratin, potentially facilitating interaction between desmosome junctions and intermediate filament architecture.</text>
</comment>
<comment type="similarity">
    <text evidence="8">Belongs to the plakin or cytolinker family.</text>
</comment>
<dbReference type="EMBL" id="BC098071">
    <property type="protein sequence ID" value="AAH98071.1"/>
    <property type="molecule type" value="mRNA"/>
</dbReference>
<dbReference type="RefSeq" id="NP_001406527.1">
    <property type="nucleotide sequence ID" value="NM_001419598.1"/>
</dbReference>
<dbReference type="RefSeq" id="XP_001058477.1">
    <property type="nucleotide sequence ID" value="XM_001058477.6"/>
</dbReference>
<dbReference type="RefSeq" id="XP_225259.4">
    <property type="nucleotide sequence ID" value="XM_225259.9"/>
</dbReference>
<dbReference type="SMR" id="F1LMV6"/>
<dbReference type="FunCoup" id="F1LMV6">
    <property type="interactions" value="320"/>
</dbReference>
<dbReference type="IntAct" id="F1LMV6">
    <property type="interactions" value="2"/>
</dbReference>
<dbReference type="STRING" id="10116.ENSRNOP00000018649"/>
<dbReference type="GlyGen" id="F1LMV6">
    <property type="glycosylation" value="1 site, 1 O-linked glycan (1 site)"/>
</dbReference>
<dbReference type="iPTMnet" id="F1LMV6"/>
<dbReference type="PhosphoSitePlus" id="F1LMV6"/>
<dbReference type="PaxDb" id="10116-ENSRNOP00000018649"/>
<dbReference type="Ensembl" id="ENSRNOT00000018649.7">
    <property type="protein sequence ID" value="ENSRNOP00000018649.5"/>
    <property type="gene ID" value="ENSRNOG00000013928.7"/>
</dbReference>
<dbReference type="GeneID" id="306871"/>
<dbReference type="AGR" id="RGD:1305794"/>
<dbReference type="RGD" id="1305794">
    <property type="gene designation" value="Dsp"/>
</dbReference>
<dbReference type="eggNOG" id="KOG0516">
    <property type="taxonomic scope" value="Eukaryota"/>
</dbReference>
<dbReference type="GeneTree" id="ENSGT00940000154843"/>
<dbReference type="HOGENOM" id="CLU_000679_1_0_1"/>
<dbReference type="InParanoid" id="F1LMV6"/>
<dbReference type="OMA" id="KYGDGMQ"/>
<dbReference type="TreeFam" id="TF106435"/>
<dbReference type="Reactome" id="R-RNO-351906">
    <property type="pathway name" value="Apoptotic cleavage of cell adhesion proteins"/>
</dbReference>
<dbReference type="Reactome" id="R-RNO-6798695">
    <property type="pathway name" value="Neutrophil degranulation"/>
</dbReference>
<dbReference type="Reactome" id="R-RNO-6805567">
    <property type="pathway name" value="Keratinization"/>
</dbReference>
<dbReference type="Reactome" id="R-RNO-6809371">
    <property type="pathway name" value="Formation of the cornified envelope"/>
</dbReference>
<dbReference type="Reactome" id="R-RNO-9696264">
    <property type="pathway name" value="RND3 GTPase cycle"/>
</dbReference>
<dbReference type="Reactome" id="R-RNO-9696273">
    <property type="pathway name" value="RND1 GTPase cycle"/>
</dbReference>
<dbReference type="PRO" id="PR:F1LMV6"/>
<dbReference type="Proteomes" id="UP000002494">
    <property type="component" value="Chromosome 17"/>
</dbReference>
<dbReference type="Bgee" id="ENSRNOG00000013928">
    <property type="expression patterns" value="Expressed in esophagus and 16 other cell types or tissues"/>
</dbReference>
<dbReference type="GO" id="GO:0005912">
    <property type="term" value="C:adherens junction"/>
    <property type="evidence" value="ECO:0000266"/>
    <property type="project" value="RGD"/>
</dbReference>
<dbReference type="GO" id="GO:0016323">
    <property type="term" value="C:basolateral plasma membrane"/>
    <property type="evidence" value="ECO:0000266"/>
    <property type="project" value="RGD"/>
</dbReference>
<dbReference type="GO" id="GO:0005911">
    <property type="term" value="C:cell-cell junction"/>
    <property type="evidence" value="ECO:0000266"/>
    <property type="project" value="RGD"/>
</dbReference>
<dbReference type="GO" id="GO:0001533">
    <property type="term" value="C:cornified envelope"/>
    <property type="evidence" value="ECO:0000266"/>
    <property type="project" value="RGD"/>
</dbReference>
<dbReference type="GO" id="GO:0005737">
    <property type="term" value="C:cytoplasm"/>
    <property type="evidence" value="ECO:0000250"/>
    <property type="project" value="UniProtKB"/>
</dbReference>
<dbReference type="GO" id="GO:0030057">
    <property type="term" value="C:desmosome"/>
    <property type="evidence" value="ECO:0000314"/>
    <property type="project" value="RGD"/>
</dbReference>
<dbReference type="GO" id="GO:0005916">
    <property type="term" value="C:fascia adherens"/>
    <property type="evidence" value="ECO:0000314"/>
    <property type="project" value="RGD"/>
</dbReference>
<dbReference type="GO" id="GO:0014704">
    <property type="term" value="C:intercalated disc"/>
    <property type="evidence" value="ECO:0000266"/>
    <property type="project" value="RGD"/>
</dbReference>
<dbReference type="GO" id="GO:0005882">
    <property type="term" value="C:intermediate filament"/>
    <property type="evidence" value="ECO:0000266"/>
    <property type="project" value="RGD"/>
</dbReference>
<dbReference type="GO" id="GO:0005886">
    <property type="term" value="C:plasma membrane"/>
    <property type="evidence" value="ECO:0000250"/>
    <property type="project" value="UniProtKB"/>
</dbReference>
<dbReference type="GO" id="GO:0005080">
    <property type="term" value="F:protein kinase C binding"/>
    <property type="evidence" value="ECO:0000266"/>
    <property type="project" value="RGD"/>
</dbReference>
<dbReference type="GO" id="GO:0097110">
    <property type="term" value="F:scaffold protein binding"/>
    <property type="evidence" value="ECO:0000266"/>
    <property type="project" value="RGD"/>
</dbReference>
<dbReference type="GO" id="GO:0005198">
    <property type="term" value="F:structural molecule activity"/>
    <property type="evidence" value="ECO:0000318"/>
    <property type="project" value="GO_Central"/>
</dbReference>
<dbReference type="GO" id="GO:0034332">
    <property type="term" value="P:adherens junction organization"/>
    <property type="evidence" value="ECO:0000266"/>
    <property type="project" value="RGD"/>
</dbReference>
<dbReference type="GO" id="GO:0086073">
    <property type="term" value="P:bundle of His cell-Purkinje myocyte adhesion involved in cell communication"/>
    <property type="evidence" value="ECO:0000266"/>
    <property type="project" value="RGD"/>
</dbReference>
<dbReference type="GO" id="GO:0098609">
    <property type="term" value="P:cell-cell adhesion"/>
    <property type="evidence" value="ECO:0000266"/>
    <property type="project" value="RGD"/>
</dbReference>
<dbReference type="GO" id="GO:0002934">
    <property type="term" value="P:desmosome organization"/>
    <property type="evidence" value="ECO:0000266"/>
    <property type="project" value="RGD"/>
</dbReference>
<dbReference type="GO" id="GO:0090136">
    <property type="term" value="P:epithelial cell-cell adhesion"/>
    <property type="evidence" value="ECO:0000266"/>
    <property type="project" value="RGD"/>
</dbReference>
<dbReference type="GO" id="GO:0045104">
    <property type="term" value="P:intermediate filament cytoskeleton organization"/>
    <property type="evidence" value="ECO:0000266"/>
    <property type="project" value="RGD"/>
</dbReference>
<dbReference type="GO" id="GO:0045109">
    <property type="term" value="P:intermediate filament organization"/>
    <property type="evidence" value="ECO:0000266"/>
    <property type="project" value="RGD"/>
</dbReference>
<dbReference type="GO" id="GO:0030216">
    <property type="term" value="P:keratinocyte differentiation"/>
    <property type="evidence" value="ECO:0000266"/>
    <property type="project" value="RGD"/>
</dbReference>
<dbReference type="GO" id="GO:0150105">
    <property type="term" value="P:protein localization to cell-cell junction"/>
    <property type="evidence" value="ECO:0000266"/>
    <property type="project" value="RGD"/>
</dbReference>
<dbReference type="GO" id="GO:0086091">
    <property type="term" value="P:regulation of heart rate by cardiac conduction"/>
    <property type="evidence" value="ECO:0000266"/>
    <property type="project" value="RGD"/>
</dbReference>
<dbReference type="GO" id="GO:0098911">
    <property type="term" value="P:regulation of ventricular cardiac muscle cell action potential"/>
    <property type="evidence" value="ECO:0000266"/>
    <property type="project" value="RGD"/>
</dbReference>
<dbReference type="GO" id="GO:0043588">
    <property type="term" value="P:skin development"/>
    <property type="evidence" value="ECO:0000266"/>
    <property type="project" value="RGD"/>
</dbReference>
<dbReference type="GO" id="GO:0003223">
    <property type="term" value="P:ventricular compact myocardium morphogenesis"/>
    <property type="evidence" value="ECO:0000266"/>
    <property type="project" value="RGD"/>
</dbReference>
<dbReference type="GO" id="GO:0042060">
    <property type="term" value="P:wound healing"/>
    <property type="evidence" value="ECO:0000318"/>
    <property type="project" value="GO_Central"/>
</dbReference>
<dbReference type="CDD" id="cd00176">
    <property type="entry name" value="SPEC"/>
    <property type="match status" value="1"/>
</dbReference>
<dbReference type="FunFam" id="1.20.58.60:FF:000125">
    <property type="entry name" value="Desmoplakin"/>
    <property type="match status" value="1"/>
</dbReference>
<dbReference type="FunFam" id="1.20.58.60:FF:000123">
    <property type="entry name" value="Desmoplakin a"/>
    <property type="match status" value="1"/>
</dbReference>
<dbReference type="FunFam" id="2.30.30.40:FF:000102">
    <property type="entry name" value="Desmoplakin a"/>
    <property type="match status" value="1"/>
</dbReference>
<dbReference type="FunFam" id="3.30.160.780:FF:000001">
    <property type="entry name" value="Plectin a"/>
    <property type="match status" value="1"/>
</dbReference>
<dbReference type="FunFam" id="3.90.1290.10:FF:000001">
    <property type="entry name" value="Plectin a"/>
    <property type="match status" value="2"/>
</dbReference>
<dbReference type="FunFam" id="3.90.1290.10:FF:000002">
    <property type="entry name" value="Plectin a"/>
    <property type="match status" value="1"/>
</dbReference>
<dbReference type="FunFam" id="1.20.58.60:FF:000010">
    <property type="entry name" value="plectin isoform X2"/>
    <property type="match status" value="1"/>
</dbReference>
<dbReference type="Gene3D" id="1.20.58.1060">
    <property type="match status" value="1"/>
</dbReference>
<dbReference type="Gene3D" id="1.20.58.60">
    <property type="match status" value="2"/>
</dbReference>
<dbReference type="Gene3D" id="3.30.160.780">
    <property type="match status" value="1"/>
</dbReference>
<dbReference type="Gene3D" id="3.90.1290.10">
    <property type="entry name" value="Plakin repeat"/>
    <property type="match status" value="3"/>
</dbReference>
<dbReference type="Gene3D" id="2.30.30.40">
    <property type="entry name" value="SH3 Domains"/>
    <property type="match status" value="1"/>
</dbReference>
<dbReference type="InterPro" id="IPR041615">
    <property type="entry name" value="Desmoplakin_SH3"/>
</dbReference>
<dbReference type="InterPro" id="IPR041573">
    <property type="entry name" value="Desmoplakin_Spectrin-like"/>
</dbReference>
<dbReference type="InterPro" id="IPR043197">
    <property type="entry name" value="Plakin"/>
</dbReference>
<dbReference type="InterPro" id="IPR035915">
    <property type="entry name" value="Plakin_repeat_sf"/>
</dbReference>
<dbReference type="InterPro" id="IPR001101">
    <property type="entry name" value="Plectin_repeat"/>
</dbReference>
<dbReference type="InterPro" id="IPR001452">
    <property type="entry name" value="SH3_domain"/>
</dbReference>
<dbReference type="InterPro" id="IPR018159">
    <property type="entry name" value="Spectrin/alpha-actinin"/>
</dbReference>
<dbReference type="PANTHER" id="PTHR23169:SF26">
    <property type="entry name" value="DESMOPLAKIN"/>
    <property type="match status" value="1"/>
</dbReference>
<dbReference type="PANTHER" id="PTHR23169">
    <property type="entry name" value="ENVOPLAKIN"/>
    <property type="match status" value="1"/>
</dbReference>
<dbReference type="Pfam" id="PF00681">
    <property type="entry name" value="Plectin"/>
    <property type="match status" value="8"/>
</dbReference>
<dbReference type="Pfam" id="PF17902">
    <property type="entry name" value="SH3_10"/>
    <property type="match status" value="1"/>
</dbReference>
<dbReference type="Pfam" id="PF18373">
    <property type="entry name" value="Spectrin_2"/>
    <property type="match status" value="1"/>
</dbReference>
<dbReference type="Pfam" id="PF21019">
    <property type="entry name" value="Spectrin_3"/>
    <property type="match status" value="1"/>
</dbReference>
<dbReference type="SMART" id="SM00250">
    <property type="entry name" value="PLEC"/>
    <property type="match status" value="18"/>
</dbReference>
<dbReference type="SMART" id="SM00150">
    <property type="entry name" value="SPEC"/>
    <property type="match status" value="2"/>
</dbReference>
<dbReference type="SUPFAM" id="SSF75399">
    <property type="entry name" value="Plakin repeat"/>
    <property type="match status" value="4"/>
</dbReference>
<dbReference type="SUPFAM" id="SSF46966">
    <property type="entry name" value="Spectrin repeat"/>
    <property type="match status" value="2"/>
</dbReference>
<dbReference type="PROSITE" id="PS50002">
    <property type="entry name" value="SH3"/>
    <property type="match status" value="1"/>
</dbReference>
<reference evidence="10" key="1">
    <citation type="journal article" date="2004" name="Nature">
        <title>Genome sequence of the Brown Norway rat yields insights into mammalian evolution.</title>
        <authorList>
            <person name="Gibbs R.A."/>
            <person name="Weinstock G.M."/>
            <person name="Metzker M.L."/>
            <person name="Muzny D.M."/>
            <person name="Sodergren E.J."/>
            <person name="Scherer S."/>
            <person name="Scott G."/>
            <person name="Steffen D."/>
            <person name="Worley K.C."/>
            <person name="Burch P.E."/>
            <person name="Okwuonu G."/>
            <person name="Hines S."/>
            <person name="Lewis L."/>
            <person name="Deramo C."/>
            <person name="Delgado O."/>
            <person name="Dugan-Rocha S."/>
            <person name="Miner G."/>
            <person name="Morgan M."/>
            <person name="Hawes A."/>
            <person name="Gill R."/>
            <person name="Holt R.A."/>
            <person name="Adams M.D."/>
            <person name="Amanatides P.G."/>
            <person name="Baden-Tillson H."/>
            <person name="Barnstead M."/>
            <person name="Chin S."/>
            <person name="Evans C.A."/>
            <person name="Ferriera S."/>
            <person name="Fosler C."/>
            <person name="Glodek A."/>
            <person name="Gu Z."/>
            <person name="Jennings D."/>
            <person name="Kraft C.L."/>
            <person name="Nguyen T."/>
            <person name="Pfannkoch C.M."/>
            <person name="Sitter C."/>
            <person name="Sutton G.G."/>
            <person name="Venter J.C."/>
            <person name="Woodage T."/>
            <person name="Smith D."/>
            <person name="Lee H.-M."/>
            <person name="Gustafson E."/>
            <person name="Cahill P."/>
            <person name="Kana A."/>
            <person name="Doucette-Stamm L."/>
            <person name="Weinstock K."/>
            <person name="Fechtel K."/>
            <person name="Weiss R.B."/>
            <person name="Dunn D.M."/>
            <person name="Green E.D."/>
            <person name="Blakesley R.W."/>
            <person name="Bouffard G.G."/>
            <person name="De Jong P.J."/>
            <person name="Osoegawa K."/>
            <person name="Zhu B."/>
            <person name="Marra M."/>
            <person name="Schein J."/>
            <person name="Bosdet I."/>
            <person name="Fjell C."/>
            <person name="Jones S."/>
            <person name="Krzywinski M."/>
            <person name="Mathewson C."/>
            <person name="Siddiqui A."/>
            <person name="Wye N."/>
            <person name="McPherson J."/>
            <person name="Zhao S."/>
            <person name="Fraser C.M."/>
            <person name="Shetty J."/>
            <person name="Shatsman S."/>
            <person name="Geer K."/>
            <person name="Chen Y."/>
            <person name="Abramzon S."/>
            <person name="Nierman W.C."/>
            <person name="Havlak P.H."/>
            <person name="Chen R."/>
            <person name="Durbin K.J."/>
            <person name="Egan A."/>
            <person name="Ren Y."/>
            <person name="Song X.-Z."/>
            <person name="Li B."/>
            <person name="Liu Y."/>
            <person name="Qin X."/>
            <person name="Cawley S."/>
            <person name="Cooney A.J."/>
            <person name="D'Souza L.M."/>
            <person name="Martin K."/>
            <person name="Wu J.Q."/>
            <person name="Gonzalez-Garay M.L."/>
            <person name="Jackson A.R."/>
            <person name="Kalafus K.J."/>
            <person name="McLeod M.P."/>
            <person name="Milosavljevic A."/>
            <person name="Virk D."/>
            <person name="Volkov A."/>
            <person name="Wheeler D.A."/>
            <person name="Zhang Z."/>
            <person name="Bailey J.A."/>
            <person name="Eichler E.E."/>
            <person name="Tuzun E."/>
            <person name="Birney E."/>
            <person name="Mongin E."/>
            <person name="Ureta-Vidal A."/>
            <person name="Woodwark C."/>
            <person name="Zdobnov E."/>
            <person name="Bork P."/>
            <person name="Suyama M."/>
            <person name="Torrents D."/>
            <person name="Alexandersson M."/>
            <person name="Trask B.J."/>
            <person name="Young J.M."/>
            <person name="Huang H."/>
            <person name="Wang H."/>
            <person name="Xing H."/>
            <person name="Daniels S."/>
            <person name="Gietzen D."/>
            <person name="Schmidt J."/>
            <person name="Stevens K."/>
            <person name="Vitt U."/>
            <person name="Wingrove J."/>
            <person name="Camara F."/>
            <person name="Mar Alba M."/>
            <person name="Abril J.F."/>
            <person name="Guigo R."/>
            <person name="Smit A."/>
            <person name="Dubchak I."/>
            <person name="Rubin E.M."/>
            <person name="Couronne O."/>
            <person name="Poliakov A."/>
            <person name="Huebner N."/>
            <person name="Ganten D."/>
            <person name="Goesele C."/>
            <person name="Hummel O."/>
            <person name="Kreitler T."/>
            <person name="Lee Y.-A."/>
            <person name="Monti J."/>
            <person name="Schulz H."/>
            <person name="Zimdahl H."/>
            <person name="Himmelbauer H."/>
            <person name="Lehrach H."/>
            <person name="Jacob H.J."/>
            <person name="Bromberg S."/>
            <person name="Gullings-Handley J."/>
            <person name="Jensen-Seaman M.I."/>
            <person name="Kwitek A.E."/>
            <person name="Lazar J."/>
            <person name="Pasko D."/>
            <person name="Tonellato P.J."/>
            <person name="Twigger S."/>
            <person name="Ponting C.P."/>
            <person name="Duarte J.M."/>
            <person name="Rice S."/>
            <person name="Goodstadt L."/>
            <person name="Beatson S.A."/>
            <person name="Emes R.D."/>
            <person name="Winter E.E."/>
            <person name="Webber C."/>
            <person name="Brandt P."/>
            <person name="Nyakatura G."/>
            <person name="Adetobi M."/>
            <person name="Chiaromonte F."/>
            <person name="Elnitski L."/>
            <person name="Eswara P."/>
            <person name="Hardison R.C."/>
            <person name="Hou M."/>
            <person name="Kolbe D."/>
            <person name="Makova K."/>
            <person name="Miller W."/>
            <person name="Nekrutenko A."/>
            <person name="Riemer C."/>
            <person name="Schwartz S."/>
            <person name="Taylor J."/>
            <person name="Yang S."/>
            <person name="Zhang Y."/>
            <person name="Lindpaintner K."/>
            <person name="Andrews T.D."/>
            <person name="Caccamo M."/>
            <person name="Clamp M."/>
            <person name="Clarke L."/>
            <person name="Curwen V."/>
            <person name="Durbin R.M."/>
            <person name="Eyras E."/>
            <person name="Searle S.M."/>
            <person name="Cooper G.M."/>
            <person name="Batzoglou S."/>
            <person name="Brudno M."/>
            <person name="Sidow A."/>
            <person name="Stone E.A."/>
            <person name="Payseur B.A."/>
            <person name="Bourque G."/>
            <person name="Lopez-Otin C."/>
            <person name="Puente X.S."/>
            <person name="Chakrabarti K."/>
            <person name="Chatterji S."/>
            <person name="Dewey C."/>
            <person name="Pachter L."/>
            <person name="Bray N."/>
            <person name="Yap V.B."/>
            <person name="Caspi A."/>
            <person name="Tesler G."/>
            <person name="Pevzner P.A."/>
            <person name="Haussler D."/>
            <person name="Roskin K.M."/>
            <person name="Baertsch R."/>
            <person name="Clawson H."/>
            <person name="Furey T.S."/>
            <person name="Hinrichs A.S."/>
            <person name="Karolchik D."/>
            <person name="Kent W.J."/>
            <person name="Rosenbloom K.R."/>
            <person name="Trumbower H."/>
            <person name="Weirauch M."/>
            <person name="Cooper D.N."/>
            <person name="Stenson P.D."/>
            <person name="Ma B."/>
            <person name="Brent M."/>
            <person name="Arumugam M."/>
            <person name="Shteynberg D."/>
            <person name="Copley R.R."/>
            <person name="Taylor M.S."/>
            <person name="Riethman H."/>
            <person name="Mudunuri U."/>
            <person name="Peterson J."/>
            <person name="Guyer M."/>
            <person name="Felsenfeld A."/>
            <person name="Old S."/>
            <person name="Mockrin S."/>
            <person name="Collins F.S."/>
        </authorList>
    </citation>
    <scope>NUCLEOTIDE SEQUENCE [LARGE SCALE GENOMIC DNA]</scope>
    <source>
        <strain evidence="10">Brown Norway</strain>
    </source>
</reference>
<reference evidence="9" key="2">
    <citation type="journal article" date="2004" name="Genome Res.">
        <title>The status, quality, and expansion of the NIH full-length cDNA project: the Mammalian Gene Collection (MGC).</title>
        <authorList>
            <consortium name="The MGC Project Team"/>
        </authorList>
    </citation>
    <scope>NUCLEOTIDE SEQUENCE [LARGE SCALE MRNA] OF 2243-2877</scope>
    <source>
        <tissue evidence="9">Placenta</tissue>
    </source>
</reference>
<reference evidence="12" key="3">
    <citation type="journal article" date="2006" name="J. Proteome Res.">
        <title>Phosphoproteomic analysis of rat liver by high capacity IMAC and LC-MS/MS.</title>
        <authorList>
            <person name="Moser K."/>
            <person name="White F.M."/>
        </authorList>
    </citation>
    <scope>IDENTIFICATION BY MASS SPECTROMETRY [LARGE SCALE ANALYSIS]</scope>
</reference>
<reference evidence="13" key="4">
    <citation type="journal article" date="2012" name="Nat. Commun.">
        <title>Quantitative maps of protein phosphorylation sites across 14 different rat organs and tissues.</title>
        <authorList>
            <person name="Lundby A."/>
            <person name="Secher A."/>
            <person name="Lage K."/>
            <person name="Nordsborg N.B."/>
            <person name="Dmytriyev A."/>
            <person name="Lundby C."/>
            <person name="Olsen J.V."/>
        </authorList>
    </citation>
    <scope>IDENTIFICATION BY MASS SPECTROMETRY [LARGE SCALE ANALYSIS]</scope>
</reference>
<reference evidence="8" key="5">
    <citation type="journal article" date="2016" name="J. Cell Biol.">
        <title>Plakophilin-2 loss promotes TGF-beta1/p38 MAPK-dependent fibrotic gene expression in cardiomyocytes.</title>
        <authorList>
            <person name="Dubash A.D."/>
            <person name="Kam C.Y."/>
            <person name="Aguado B.A."/>
            <person name="Patel D.M."/>
            <person name="Delmar M."/>
            <person name="Shea L.D."/>
            <person name="Green K.J."/>
        </authorList>
    </citation>
    <scope>FUNCTION</scope>
    <scope>TISSUE SPECIFICITY</scope>
</reference>
<feature type="chain" id="PRO_0000456830" description="Desmoplakin">
    <location>
        <begin position="1"/>
        <end position="2877"/>
    </location>
</feature>
<feature type="repeat" description="Spectrin 1" evidence="8">
    <location>
        <begin position="185"/>
        <end position="278"/>
    </location>
</feature>
<feature type="repeat" description="Spectrin 2" evidence="8">
    <location>
        <begin position="279"/>
        <end position="382"/>
    </location>
</feature>
<feature type="repeat" description="Spectrin 3a" evidence="8">
    <location>
        <begin position="383"/>
        <end position="453"/>
    </location>
</feature>
<feature type="domain" description="SH3" evidence="4">
    <location>
        <begin position="465"/>
        <end position="522"/>
    </location>
</feature>
<feature type="repeat" description="Spectrin 3b" evidence="8">
    <location>
        <begin position="523"/>
        <end position="552"/>
    </location>
</feature>
<feature type="repeat" description="Spectrin 4" evidence="8">
    <location>
        <begin position="553"/>
        <end position="634"/>
    </location>
</feature>
<feature type="repeat" description="Spectrin 5" evidence="8">
    <location>
        <begin position="661"/>
        <end position="776"/>
    </location>
</feature>
<feature type="repeat" description="Spectrin 6" evidence="8">
    <location>
        <begin position="777"/>
        <end position="890"/>
    </location>
</feature>
<feature type="repeat" description="Plectin 1" evidence="8">
    <location>
        <begin position="2016"/>
        <end position="2052"/>
    </location>
</feature>
<feature type="repeat" description="Plectin 2" evidence="8">
    <location>
        <begin position="2053"/>
        <end position="2090"/>
    </location>
</feature>
<feature type="repeat" description="Plectin 3" evidence="8">
    <location>
        <begin position="2091"/>
        <end position="2128"/>
    </location>
</feature>
<feature type="repeat" description="Plectin 4" evidence="8">
    <location>
        <begin position="2129"/>
        <end position="2166"/>
    </location>
</feature>
<feature type="repeat" description="Plectin 5" evidence="8">
    <location>
        <begin position="2170"/>
        <end position="2204"/>
    </location>
</feature>
<feature type="repeat" description="Plectin 6" evidence="8">
    <location>
        <begin position="2205"/>
        <end position="2240"/>
    </location>
</feature>
<feature type="repeat" description="Plectin 7" evidence="8">
    <location>
        <begin position="2258"/>
        <end position="2295"/>
    </location>
</feature>
<feature type="repeat" description="Plectin 8" evidence="8">
    <location>
        <begin position="2296"/>
        <end position="2333"/>
    </location>
</feature>
<feature type="repeat" description="Plectin 9" evidence="8">
    <location>
        <begin position="2334"/>
        <end position="2371"/>
    </location>
</feature>
<feature type="repeat" description="Plectin 10" evidence="8">
    <location>
        <begin position="2372"/>
        <end position="2409"/>
    </location>
</feature>
<feature type="repeat" description="Plectin 11" evidence="8">
    <location>
        <begin position="2413"/>
        <end position="2447"/>
    </location>
</feature>
<feature type="repeat" description="Plectin 12" evidence="8">
    <location>
        <begin position="2463"/>
        <end position="2500"/>
    </location>
</feature>
<feature type="repeat" description="Plectin 13" evidence="8">
    <location>
        <begin position="2514"/>
        <end position="2551"/>
    </location>
</feature>
<feature type="repeat" description="LRR 15" evidence="3">
    <location>
        <begin position="2603"/>
        <end position="2628"/>
    </location>
</feature>
<feature type="repeat" description="Plectin 14" evidence="8">
    <location>
        <begin position="2617"/>
        <end position="2654"/>
    </location>
</feature>
<feature type="repeat" description="Plectin 15" evidence="8">
    <location>
        <begin position="2655"/>
        <end position="2692"/>
    </location>
</feature>
<feature type="repeat" description="Plectin 16" evidence="8">
    <location>
        <begin position="2731"/>
        <end position="2768"/>
    </location>
</feature>
<feature type="repeat" description="Plectin 17" evidence="8">
    <location>
        <begin position="2769"/>
        <end position="2806"/>
    </location>
</feature>
<feature type="region of interest" description="Globular 1" evidence="8">
    <location>
        <begin position="1"/>
        <end position="1063"/>
    </location>
</feature>
<feature type="region of interest" description="Interaction with PKP1, JUP, PKP2" evidence="2">
    <location>
        <begin position="1"/>
        <end position="591"/>
    </location>
</feature>
<feature type="region of interest" description="Disordered" evidence="5">
    <location>
        <begin position="1"/>
        <end position="20"/>
    </location>
</feature>
<feature type="region of interest" description="Central fibrous rod domain" evidence="8">
    <location>
        <begin position="1064"/>
        <end position="1952"/>
    </location>
</feature>
<feature type="region of interest" description="Globular 2" evidence="8">
    <location>
        <begin position="1953"/>
        <end position="2877"/>
    </location>
</feature>
<feature type="region of interest" description="4.5 X 38 AA tandem repeats (Domain A)" evidence="2">
    <location>
        <begin position="1967"/>
        <end position="2215"/>
    </location>
</feature>
<feature type="region of interest" description="4.5 X 38 AA tandem repeats (Domain B)" evidence="2">
    <location>
        <begin position="2251"/>
        <end position="2453"/>
    </location>
</feature>
<feature type="region of interest" description="4.5 X 38 AA tandem repeats (Domain C)" evidence="2">
    <location>
        <begin position="2616"/>
        <end position="2828"/>
    </location>
</feature>
<feature type="region of interest" description="Disordered" evidence="5">
    <location>
        <begin position="2817"/>
        <end position="2877"/>
    </location>
</feature>
<feature type="region of interest" description="6 X 4 AA tandem repeats of G-S-R-[SR]" evidence="2">
    <location>
        <begin position="2830"/>
        <end position="2853"/>
    </location>
</feature>
<feature type="coiled-coil region" evidence="3">
    <location>
        <begin position="1034"/>
        <end position="1280"/>
    </location>
</feature>
<feature type="coiled-coil region" evidence="3">
    <location>
        <begin position="1313"/>
        <end position="1354"/>
    </location>
</feature>
<feature type="coiled-coil region" evidence="3">
    <location>
        <begin position="1395"/>
        <end position="1443"/>
    </location>
</feature>
<feature type="coiled-coil region" evidence="3">
    <location>
        <begin position="1473"/>
        <end position="1926"/>
    </location>
</feature>
<feature type="compositionally biased region" description="Low complexity" evidence="5">
    <location>
        <begin position="2830"/>
        <end position="2853"/>
    </location>
</feature>
<feature type="compositionally biased region" description="Low complexity" evidence="5">
    <location>
        <begin position="2862"/>
        <end position="2877"/>
    </location>
</feature>
<feature type="modified residue" description="Phosphoserine" evidence="2">
    <location>
        <position position="22"/>
    </location>
</feature>
<feature type="modified residue" description="Phosphoserine" evidence="2">
    <location>
        <position position="62"/>
    </location>
</feature>
<feature type="modified residue" description="Phosphotyrosine" evidence="1">
    <location>
        <position position="65"/>
    </location>
</feature>
<feature type="modified residue" description="Phosphothreonine" evidence="1">
    <location>
        <position position="70"/>
    </location>
</feature>
<feature type="modified residue" description="Phosphoserine" evidence="2">
    <location>
        <position position="174"/>
    </location>
</feature>
<feature type="modified residue" description="Phosphoserine" evidence="2">
    <location>
        <position position="175"/>
    </location>
</feature>
<feature type="modified residue" description="Phosphoserine" evidence="2">
    <location>
        <position position="183"/>
    </location>
</feature>
<feature type="modified residue" description="Phosphoserine" evidence="2">
    <location>
        <position position="1665"/>
    </location>
</feature>
<feature type="modified residue" description="Phosphoserine" evidence="2">
    <location>
        <position position="1715"/>
    </location>
</feature>
<feature type="modified residue" description="Phosphoserine" evidence="2">
    <location>
        <position position="2031"/>
    </location>
</feature>
<feature type="modified residue" description="Phosphoserine" evidence="2">
    <location>
        <position position="2214"/>
    </location>
</feature>
<feature type="modified residue" description="Phosphoserine" evidence="2">
    <location>
        <position position="2216"/>
    </location>
</feature>
<feature type="modified residue" description="Phosphoserine" evidence="2">
    <location>
        <position position="2232"/>
    </location>
</feature>
<feature type="modified residue" description="Phosphoserine" evidence="2">
    <location>
        <position position="2817"/>
    </location>
</feature>
<feature type="modified residue" description="Phosphoserine" evidence="2">
    <location>
        <position position="2822"/>
    </location>
</feature>
<feature type="modified residue" description="Phosphotyrosine" evidence="2">
    <location>
        <position position="2824"/>
    </location>
</feature>
<feature type="modified residue" description="Phosphoserine" evidence="2">
    <location>
        <position position="2827"/>
    </location>
</feature>
<feature type="modified residue" description="Phosphoserine" evidence="2">
    <location>
        <position position="2831"/>
    </location>
</feature>
<feature type="modified residue" description="Omega-N-methylarginine" evidence="1">
    <location>
        <position position="2832"/>
    </location>
</feature>
<feature type="modified residue" description="Omega-N-methylarginine" evidence="1">
    <location>
        <position position="2853"/>
    </location>
</feature>
<feature type="modified residue" description="Phosphoserine" evidence="2">
    <location>
        <position position="2855"/>
    </location>
</feature>
<feature type="modified residue" description="Phosphothreonine" evidence="2">
    <location>
        <position position="2859"/>
    </location>
</feature>
<feature type="modified residue" description="Phosphoserine" evidence="2">
    <location>
        <position position="2874"/>
    </location>
</feature>
<protein>
    <recommendedName>
        <fullName evidence="11">Desmoplakin</fullName>
        <shortName evidence="7">DP</shortName>
    </recommendedName>
</protein>
<evidence type="ECO:0000250" key="1">
    <source>
        <dbReference type="UniProtKB" id="E9Q557"/>
    </source>
</evidence>
<evidence type="ECO:0000250" key="2">
    <source>
        <dbReference type="UniProtKB" id="P15924"/>
    </source>
</evidence>
<evidence type="ECO:0000255" key="3"/>
<evidence type="ECO:0000255" key="4">
    <source>
        <dbReference type="PROSITE-ProRule" id="PRU00192"/>
    </source>
</evidence>
<evidence type="ECO:0000256" key="5">
    <source>
        <dbReference type="SAM" id="MobiDB-lite"/>
    </source>
</evidence>
<evidence type="ECO:0000269" key="6">
    <source>
    </source>
</evidence>
<evidence type="ECO:0000303" key="7">
    <source>
    </source>
</evidence>
<evidence type="ECO:0000305" key="8"/>
<evidence type="ECO:0000312" key="9">
    <source>
        <dbReference type="EMBL" id="AAH98071.1"/>
    </source>
</evidence>
<evidence type="ECO:0000312" key="10">
    <source>
        <dbReference type="Proteomes" id="UP000002494"/>
    </source>
</evidence>
<evidence type="ECO:0000312" key="11">
    <source>
        <dbReference type="RGD" id="1305794"/>
    </source>
</evidence>
<evidence type="ECO:0007744" key="12">
    <source>
    </source>
</evidence>
<evidence type="ECO:0007744" key="13">
    <source>
    </source>
</evidence>
<sequence>MSCNGGSHPRINTLGRMTRAESGPDLRYEMTYSGGGGGGGGGGGGTSRMYYSRRCTVNDQNSDGYCQTGTMSRHQNQNTIQELLQNCADCLMRAELIAQPELKFGEGIQLAWNRELDEYFTQANDQMEIIDGLIREMRQMGQPCDAYQKRLLQLQEQMRALYKAISAPRVRRASSKGGYTCQSGSGWDEFTKRLTGECLGWMRQQRAEMDLMAWGVDSGSVEQHINSHRSIHNAIGDYRWQLDKIKADLREKSAIYQLEEEYENLLKASFERMDHLRQLQNIIQATSREIMWINDCEEEELLYDWSDKNTNIAQKQEAFSIRMSQLEVKEKELNKLKQESDQLVLNQHPASDKIEAYMDTLQTQWSWILQITKCIDVHLKENAAYFQFFEEAQSTEAYLKGLQDSIRKKYPCDKNMPLQHLLEQIKELEKEREKILEYKRQVQNLVNKSKKIVQLKPRNPDYRSNKPIILRALCDYKQDQKIVHKGDECILKDNNERSKWYVTGPGGVDMLVPSVGLIIPPPNPLAVDLSCKIEQYYEAILALWNQLYINMKSLVSWHYCMIDIEKIRAMTIAKLKTMRQEDYMKTIEDLELHYQDFIKNSQGSEMFGDDDKRRMQSQFTDAQKHYQTLVIQLPGHPQHQTVTKTEITHVGTCQDVNHNKVIETNRENDKQETWLLMELQKIRRQMEHCEARMTLKNLLLTDQGSTHNITVKINELKSVQNDSQALAEVLNQLKDMLANFRGSEKYCYLQNEIFGLFQKLENINGVTDGYLNSLCSVRALLQAILQTEDMLKVYEARLTEEETVCLDLDKVEAYRCGLKKIKNDLNLKKSLLATMKTELQKAQQIHSQSSQQYPLYDLDLGKFTEKVTQLTDRWQKIDKQIDFRLWDLEKQIKQLRNYRDNYQSFCKWLYDAKRRQDSLESMKFGDSNTVMRFLNEQKNLHNEISGKRDKSEEVHKIAELCANSIKDYELQLASYTSGLETLLNIPIKRTMVQSPSGVILQEAADIHARYIELLTRSGDYYRFLSEMLKSLEDLKLKNTKIEVLEEELRLARDANSENCNKNKFLDQNLQKYQAECSQFKAKLVSLEELKRQAELDGKSAKQNLDKCYGQIKELNEKITRLTYEIEDEKRRRKTVEDRFDQQKNDYDQLQKARQCEKESLGWQKLESEKAIKEKEYEIERLRVLLQEEGARKREYENELAKVRNHYNEEMSNLRNKYETEINITKTTIKEISMQKEDDSKNLRNQLDRLSRENRDLKDEIVRLNDSILQATEQRRRAEENALQQKACGSEIMQKKQHLEVELKQVIQQRSEDNARHKQSLEEAAKTIQDKNKEIERLKAEYQEEAKRRWEYENELSKVRNSYDEEIISLRNKFETEINITKTTIHQLTMQKEEDTSGYRAQIDNLTRENRSLSEEVKRLKNTLAQTTENLRRVEENVQQQKASGSEMSQRKQQLEIELRQVSQMRTEESMRYKQSLDDAAKTIQDKNKEIERLKQLVDKETNERKCLEDENSKLQRVQYDLQKANNSATEAMSKLKVQEQELTRLRIDYERVSQERTVKDQDITRIQSSLKDLQLQKQKAEEELSRLKRTASDESSKRKMLEEELEAMRRSLKEQAVKITNLTQQLEQASIVKKRSEDDLRQQRDVLDGHVREKQRTQEELRRLSLDVEALRRQLVQEQENVKQAHLRNEHFQKAIEDKSRSLNESKIEIERLQSLTENLTKEHLMLEEELRNLRLEYDDLRRGRSEADNDKNSTISELRSQLQISNNRTLELQGLINDLQRERENLRQEIEKFQKQALEASNRIQESKSQCTQVVQERESLLVKIKVLEQDKARLQRLEDELNRAKATLEAETRVKQRLECEKQQIQNDLNQWKTQYSRKEETIRKIESEREKSEREKNSLRSEIERLQAEIKRIEERCRRKLEDSTRETQSQLETERCRLQKEIDKLRQRPYGSHRETQTEYEWTVDSSKLVFDGLRKKVTAMQLYECQLIDKTTLDKLLKGKKSVEEVASEIQPFLRGAGAIAGASASPKEKYSLVEAKRKKFITPESTVMLLEAQAATGGIIDPHRNEKLTVDNAIARDLIDFDDRQQIYTAEKAITGFDDPFSGKTVSVSEAIKKNLIDRETGMRLLEAQLASGGVVDPVNSVFLPKDVALARGLIDRDLYRSLNDPRDSQKNFVDPITKKKVSYMQLRERCRIEPHTGLLLLSVQKRSMSFQGIRQPVTVTELVDSGILRPSTVNELESGQISYDEVGERIKDFLQGSSCIAGIYNETTKQKLGIYEAMKIGLVRPGTALELLEAQAATGFIVDPVSNLRLPVEEAYKRGLVGIEFKEKLLSAERAVTGYNDPETGNIISLFQAMNKELIEKGHGIRLLEAQIATGGIIDPKESHRLPVDMAYKRGYFNEELSEILSDPSDDTKGFFDPNTEENLTYLQLKERCIKDEETGLCLLPLKEKKKQVQTSQKNTLRKRRVVIVDPETNKEMSVQEAYKKGLIDYETFKELCEQECEWEEITITGSDGSTRVVLVDRKTGSQYDIQDAIDKGLVDRKFFDQYRSGSLSLTQFADMISLKNGVGTSSGLSGSVNDDVFSSSRHESVSKISTISSVRNLTIRSSSLSDPLEESSPIAAIFDTENLEKISITEGIERGIVDSITGQRLLEAQACTGGIIHPTTGQKLSLQDAVSQGLIDQDMATRLKPAQKAFIGFEGVKGKKKMSAAEAVKEKWLPYEAGQRFLEFQFLTGGLVDPEVHGRISTEEAIRKGFIDGRAAQRLQDISSYAKILTCPKTKLKISYKDAMNRSMVEDITGLRLLEAASVSSKGLPSPYNMSAPGSRSGSRSGSRSGSRSGSRSGSRRGSFDATGNSSYSYSYSFSSSSIGY</sequence>
<keyword id="KW-0965">Cell junction</keyword>
<keyword id="KW-1003">Cell membrane</keyword>
<keyword id="KW-0175">Coiled coil</keyword>
<keyword id="KW-0963">Cytoplasm</keyword>
<keyword id="KW-0433">Leucine-rich repeat</keyword>
<keyword id="KW-0472">Membrane</keyword>
<keyword id="KW-0488">Methylation</keyword>
<keyword id="KW-0597">Phosphoprotein</keyword>
<keyword id="KW-1185">Reference proteome</keyword>
<keyword id="KW-0677">Repeat</keyword>
<keyword id="KW-0728">SH3 domain</keyword>